<accession>A9L3Q7</accession>
<sequence>MNYFELFKFPPAFDIDTALLAERYRELQRAVHPDKFANDTEQQKLLSVQRTAQVNDGFQTLKDPIRRAEHMLSLRGIELSHETTTVKDTGFLMQQMEWREALEDIRDSADPQASIDELYQSFAEYREQLTQQLTQLLTSEQAEDALLAADQVRKLKFMAKLHDELTRVEDALLD</sequence>
<keyword id="KW-0143">Chaperone</keyword>
<organism>
    <name type="scientific">Shewanella baltica (strain OS195)</name>
    <dbReference type="NCBI Taxonomy" id="399599"/>
    <lineage>
        <taxon>Bacteria</taxon>
        <taxon>Pseudomonadati</taxon>
        <taxon>Pseudomonadota</taxon>
        <taxon>Gammaproteobacteria</taxon>
        <taxon>Alteromonadales</taxon>
        <taxon>Shewanellaceae</taxon>
        <taxon>Shewanella</taxon>
    </lineage>
</organism>
<feature type="chain" id="PRO_1000083036" description="Co-chaperone protein HscB homolog">
    <location>
        <begin position="1"/>
        <end position="174"/>
    </location>
</feature>
<feature type="domain" description="J" evidence="1">
    <location>
        <begin position="2"/>
        <end position="74"/>
    </location>
</feature>
<proteinExistence type="inferred from homology"/>
<dbReference type="EMBL" id="CP000891">
    <property type="protein sequence ID" value="ABX49667.1"/>
    <property type="molecule type" value="Genomic_DNA"/>
</dbReference>
<dbReference type="RefSeq" id="WP_012197239.1">
    <property type="nucleotide sequence ID" value="NC_009997.1"/>
</dbReference>
<dbReference type="SMR" id="A9L3Q7"/>
<dbReference type="GeneID" id="11772605"/>
<dbReference type="KEGG" id="sbn:Sbal195_2499"/>
<dbReference type="HOGENOM" id="CLU_068529_2_0_6"/>
<dbReference type="Proteomes" id="UP000000770">
    <property type="component" value="Chromosome"/>
</dbReference>
<dbReference type="GO" id="GO:1990230">
    <property type="term" value="C:iron-sulfur cluster transfer complex"/>
    <property type="evidence" value="ECO:0007669"/>
    <property type="project" value="TreeGrafter"/>
</dbReference>
<dbReference type="GO" id="GO:0001671">
    <property type="term" value="F:ATPase activator activity"/>
    <property type="evidence" value="ECO:0007669"/>
    <property type="project" value="InterPro"/>
</dbReference>
<dbReference type="GO" id="GO:0051087">
    <property type="term" value="F:protein-folding chaperone binding"/>
    <property type="evidence" value="ECO:0007669"/>
    <property type="project" value="InterPro"/>
</dbReference>
<dbReference type="GO" id="GO:0044571">
    <property type="term" value="P:[2Fe-2S] cluster assembly"/>
    <property type="evidence" value="ECO:0007669"/>
    <property type="project" value="InterPro"/>
</dbReference>
<dbReference type="GO" id="GO:0051259">
    <property type="term" value="P:protein complex oligomerization"/>
    <property type="evidence" value="ECO:0007669"/>
    <property type="project" value="InterPro"/>
</dbReference>
<dbReference type="GO" id="GO:0006457">
    <property type="term" value="P:protein folding"/>
    <property type="evidence" value="ECO:0007669"/>
    <property type="project" value="UniProtKB-UniRule"/>
</dbReference>
<dbReference type="CDD" id="cd06257">
    <property type="entry name" value="DnaJ"/>
    <property type="match status" value="1"/>
</dbReference>
<dbReference type="Gene3D" id="1.10.287.110">
    <property type="entry name" value="DnaJ domain"/>
    <property type="match status" value="1"/>
</dbReference>
<dbReference type="Gene3D" id="1.20.1280.20">
    <property type="entry name" value="HscB, C-terminal domain"/>
    <property type="match status" value="1"/>
</dbReference>
<dbReference type="HAMAP" id="MF_00682">
    <property type="entry name" value="HscB"/>
    <property type="match status" value="1"/>
</dbReference>
<dbReference type="InterPro" id="IPR001623">
    <property type="entry name" value="DnaJ_domain"/>
</dbReference>
<dbReference type="InterPro" id="IPR004640">
    <property type="entry name" value="HscB"/>
</dbReference>
<dbReference type="InterPro" id="IPR036386">
    <property type="entry name" value="HscB_C_sf"/>
</dbReference>
<dbReference type="InterPro" id="IPR009073">
    <property type="entry name" value="HscB_oligo_C"/>
</dbReference>
<dbReference type="InterPro" id="IPR036869">
    <property type="entry name" value="J_dom_sf"/>
</dbReference>
<dbReference type="NCBIfam" id="TIGR00714">
    <property type="entry name" value="hscB"/>
    <property type="match status" value="1"/>
</dbReference>
<dbReference type="NCBIfam" id="NF003449">
    <property type="entry name" value="PRK05014.1"/>
    <property type="match status" value="1"/>
</dbReference>
<dbReference type="PANTHER" id="PTHR14021">
    <property type="entry name" value="IRON-SULFUR CLUSTER CO-CHAPERONE PROTEIN HSCB"/>
    <property type="match status" value="1"/>
</dbReference>
<dbReference type="PANTHER" id="PTHR14021:SF15">
    <property type="entry name" value="IRON-SULFUR CLUSTER CO-CHAPERONE PROTEIN HSCB"/>
    <property type="match status" value="1"/>
</dbReference>
<dbReference type="Pfam" id="PF07743">
    <property type="entry name" value="HSCB_C"/>
    <property type="match status" value="1"/>
</dbReference>
<dbReference type="SMART" id="SM00271">
    <property type="entry name" value="DnaJ"/>
    <property type="match status" value="1"/>
</dbReference>
<dbReference type="SUPFAM" id="SSF46565">
    <property type="entry name" value="Chaperone J-domain"/>
    <property type="match status" value="1"/>
</dbReference>
<dbReference type="SUPFAM" id="SSF47144">
    <property type="entry name" value="HSC20 (HSCB), C-terminal oligomerisation domain"/>
    <property type="match status" value="1"/>
</dbReference>
<dbReference type="PROSITE" id="PS50076">
    <property type="entry name" value="DNAJ_2"/>
    <property type="match status" value="1"/>
</dbReference>
<comment type="function">
    <text evidence="1">Co-chaperone involved in the maturation of iron-sulfur cluster-containing proteins. Seems to help targeting proteins to be folded toward HscA.</text>
</comment>
<comment type="subunit">
    <text evidence="1">Interacts with HscA and stimulates its ATPase activity.</text>
</comment>
<comment type="similarity">
    <text evidence="1">Belongs to the HscB family.</text>
</comment>
<protein>
    <recommendedName>
        <fullName evidence="1">Co-chaperone protein HscB homolog</fullName>
    </recommendedName>
</protein>
<evidence type="ECO:0000255" key="1">
    <source>
        <dbReference type="HAMAP-Rule" id="MF_00682"/>
    </source>
</evidence>
<reference key="1">
    <citation type="submission" date="2007-11" db="EMBL/GenBank/DDBJ databases">
        <title>Complete sequence of chromosome of Shewanella baltica OS195.</title>
        <authorList>
            <consortium name="US DOE Joint Genome Institute"/>
            <person name="Copeland A."/>
            <person name="Lucas S."/>
            <person name="Lapidus A."/>
            <person name="Barry K."/>
            <person name="Glavina del Rio T."/>
            <person name="Dalin E."/>
            <person name="Tice H."/>
            <person name="Pitluck S."/>
            <person name="Chain P."/>
            <person name="Malfatti S."/>
            <person name="Shin M."/>
            <person name="Vergez L."/>
            <person name="Schmutz J."/>
            <person name="Larimer F."/>
            <person name="Land M."/>
            <person name="Hauser L."/>
            <person name="Kyrpides N."/>
            <person name="Kim E."/>
            <person name="Brettar I."/>
            <person name="Rodrigues J."/>
            <person name="Konstantinidis K."/>
            <person name="Klappenbach J."/>
            <person name="Hofle M."/>
            <person name="Tiedje J."/>
            <person name="Richardson P."/>
        </authorList>
    </citation>
    <scope>NUCLEOTIDE SEQUENCE [LARGE SCALE GENOMIC DNA]</scope>
    <source>
        <strain>OS195</strain>
    </source>
</reference>
<gene>
    <name evidence="1" type="primary">hscB</name>
    <name type="ordered locus">Sbal195_2499</name>
</gene>
<name>HSCB_SHEB9</name>